<evidence type="ECO:0000255" key="1">
    <source>
        <dbReference type="HAMAP-Rule" id="MF_00366"/>
    </source>
</evidence>
<name>RPOZ_GLAP5</name>
<reference key="1">
    <citation type="journal article" date="2009" name="J. Bacteriol.">
        <title>Complete genome sequence of Haemophilus parasuis SH0165.</title>
        <authorList>
            <person name="Yue M."/>
            <person name="Yang F."/>
            <person name="Yang J."/>
            <person name="Bei W."/>
            <person name="Cai X."/>
            <person name="Chen L."/>
            <person name="Dong J."/>
            <person name="Zhou R."/>
            <person name="Jin M."/>
            <person name="Jin Q."/>
            <person name="Chen H."/>
        </authorList>
    </citation>
    <scope>NUCLEOTIDE SEQUENCE [LARGE SCALE GENOMIC DNA]</scope>
    <source>
        <strain>SH0165</strain>
    </source>
</reference>
<gene>
    <name evidence="1" type="primary">rpoZ</name>
    <name type="ordered locus">HAPS_1035</name>
</gene>
<protein>
    <recommendedName>
        <fullName evidence="1">DNA-directed RNA polymerase subunit omega</fullName>
        <shortName evidence="1">RNAP omega subunit</shortName>
        <ecNumber evidence="1">2.7.7.6</ecNumber>
    </recommendedName>
    <alternativeName>
        <fullName evidence="1">RNA polymerase omega subunit</fullName>
    </alternativeName>
    <alternativeName>
        <fullName evidence="1">Transcriptase subunit omega</fullName>
    </alternativeName>
</protein>
<organism>
    <name type="scientific">Glaesserella parasuis serovar 5 (strain SH0165)</name>
    <name type="common">Haemophilus parasuis</name>
    <dbReference type="NCBI Taxonomy" id="557723"/>
    <lineage>
        <taxon>Bacteria</taxon>
        <taxon>Pseudomonadati</taxon>
        <taxon>Pseudomonadota</taxon>
        <taxon>Gammaproteobacteria</taxon>
        <taxon>Pasteurellales</taxon>
        <taxon>Pasteurellaceae</taxon>
        <taxon>Glaesserella</taxon>
    </lineage>
</organism>
<sequence length="93" mass="10458">MARVTVQDAVEKIGNRFDLILTAARRARQLQLHTREPLVAEEGDKPTVIALREIEEGLINNQIMDQQEKFDAIVQEVAEKEAISFLADVQANS</sequence>
<dbReference type="EC" id="2.7.7.6" evidence="1"/>
<dbReference type="EMBL" id="CP001321">
    <property type="protein sequence ID" value="ACL32654.1"/>
    <property type="molecule type" value="Genomic_DNA"/>
</dbReference>
<dbReference type="RefSeq" id="WP_015939584.1">
    <property type="nucleotide sequence ID" value="NC_011852.1"/>
</dbReference>
<dbReference type="SMR" id="B8F5Q2"/>
<dbReference type="STRING" id="557723.HAPS_1035"/>
<dbReference type="GeneID" id="66617997"/>
<dbReference type="KEGG" id="hap:HAPS_1035"/>
<dbReference type="HOGENOM" id="CLU_125406_5_3_6"/>
<dbReference type="Proteomes" id="UP000006743">
    <property type="component" value="Chromosome"/>
</dbReference>
<dbReference type="GO" id="GO:0000428">
    <property type="term" value="C:DNA-directed RNA polymerase complex"/>
    <property type="evidence" value="ECO:0007669"/>
    <property type="project" value="UniProtKB-KW"/>
</dbReference>
<dbReference type="GO" id="GO:0003677">
    <property type="term" value="F:DNA binding"/>
    <property type="evidence" value="ECO:0007669"/>
    <property type="project" value="UniProtKB-UniRule"/>
</dbReference>
<dbReference type="GO" id="GO:0003899">
    <property type="term" value="F:DNA-directed RNA polymerase activity"/>
    <property type="evidence" value="ECO:0007669"/>
    <property type="project" value="UniProtKB-UniRule"/>
</dbReference>
<dbReference type="GO" id="GO:0006351">
    <property type="term" value="P:DNA-templated transcription"/>
    <property type="evidence" value="ECO:0007669"/>
    <property type="project" value="UniProtKB-UniRule"/>
</dbReference>
<dbReference type="Gene3D" id="3.90.940.10">
    <property type="match status" value="1"/>
</dbReference>
<dbReference type="HAMAP" id="MF_00366">
    <property type="entry name" value="RNApol_bact_RpoZ"/>
    <property type="match status" value="1"/>
</dbReference>
<dbReference type="InterPro" id="IPR003716">
    <property type="entry name" value="DNA-dir_RNA_pol_omega"/>
</dbReference>
<dbReference type="InterPro" id="IPR006110">
    <property type="entry name" value="Pol_omega/Rpo6/RPB6"/>
</dbReference>
<dbReference type="InterPro" id="IPR036161">
    <property type="entry name" value="RPB6/omega-like_sf"/>
</dbReference>
<dbReference type="NCBIfam" id="TIGR00690">
    <property type="entry name" value="rpoZ"/>
    <property type="match status" value="1"/>
</dbReference>
<dbReference type="PANTHER" id="PTHR34476">
    <property type="entry name" value="DNA-DIRECTED RNA POLYMERASE SUBUNIT OMEGA"/>
    <property type="match status" value="1"/>
</dbReference>
<dbReference type="PANTHER" id="PTHR34476:SF1">
    <property type="entry name" value="DNA-DIRECTED RNA POLYMERASE SUBUNIT OMEGA"/>
    <property type="match status" value="1"/>
</dbReference>
<dbReference type="Pfam" id="PF01192">
    <property type="entry name" value="RNA_pol_Rpb6"/>
    <property type="match status" value="1"/>
</dbReference>
<dbReference type="SMART" id="SM01409">
    <property type="entry name" value="RNA_pol_Rpb6"/>
    <property type="match status" value="1"/>
</dbReference>
<dbReference type="SUPFAM" id="SSF63562">
    <property type="entry name" value="RPB6/omega subunit-like"/>
    <property type="match status" value="1"/>
</dbReference>
<keyword id="KW-0240">DNA-directed RNA polymerase</keyword>
<keyword id="KW-0548">Nucleotidyltransferase</keyword>
<keyword id="KW-1185">Reference proteome</keyword>
<keyword id="KW-0804">Transcription</keyword>
<keyword id="KW-0808">Transferase</keyword>
<accession>B8F5Q2</accession>
<feature type="chain" id="PRO_1000194797" description="DNA-directed RNA polymerase subunit omega">
    <location>
        <begin position="1"/>
        <end position="93"/>
    </location>
</feature>
<comment type="function">
    <text evidence="1">Promotes RNA polymerase assembly. Latches the N- and C-terminal regions of the beta' subunit thereby facilitating its interaction with the beta and alpha subunits.</text>
</comment>
<comment type="catalytic activity">
    <reaction evidence="1">
        <text>RNA(n) + a ribonucleoside 5'-triphosphate = RNA(n+1) + diphosphate</text>
        <dbReference type="Rhea" id="RHEA:21248"/>
        <dbReference type="Rhea" id="RHEA-COMP:14527"/>
        <dbReference type="Rhea" id="RHEA-COMP:17342"/>
        <dbReference type="ChEBI" id="CHEBI:33019"/>
        <dbReference type="ChEBI" id="CHEBI:61557"/>
        <dbReference type="ChEBI" id="CHEBI:140395"/>
        <dbReference type="EC" id="2.7.7.6"/>
    </reaction>
</comment>
<comment type="subunit">
    <text evidence="1">The RNAP catalytic core consists of 2 alpha, 1 beta, 1 beta' and 1 omega subunit. When a sigma factor is associated with the core the holoenzyme is formed, which can initiate transcription.</text>
</comment>
<comment type="similarity">
    <text evidence="1">Belongs to the RNA polymerase subunit omega family.</text>
</comment>
<proteinExistence type="inferred from homology"/>